<comment type="function">
    <text evidence="1">Part of the ABC transporter complex BtuCDF involved in vitamin B12 import. Responsible for energy coupling to the transport system.</text>
</comment>
<comment type="catalytic activity">
    <reaction evidence="1">
        <text>an R-cob(III)alamin(out) + ATP + H2O = an R-cob(III)alamin(in) + ADP + phosphate + H(+)</text>
        <dbReference type="Rhea" id="RHEA:17873"/>
        <dbReference type="ChEBI" id="CHEBI:15377"/>
        <dbReference type="ChEBI" id="CHEBI:15378"/>
        <dbReference type="ChEBI" id="CHEBI:30616"/>
        <dbReference type="ChEBI" id="CHEBI:43474"/>
        <dbReference type="ChEBI" id="CHEBI:140785"/>
        <dbReference type="ChEBI" id="CHEBI:456216"/>
        <dbReference type="EC" id="7.6.2.8"/>
    </reaction>
</comment>
<comment type="subunit">
    <text evidence="1">The complex is composed of two ATP-binding proteins (BtuD), two transmembrane proteins (BtuC) and a solute-binding protein (BtuF).</text>
</comment>
<comment type="subcellular location">
    <subcellularLocation>
        <location evidence="1">Cell inner membrane</location>
        <topology evidence="1">Peripheral membrane protein</topology>
    </subcellularLocation>
</comment>
<comment type="similarity">
    <text evidence="1">Belongs to the ABC transporter superfamily. Vitamin B12 importer (TC 3.A.1.13.1) family.</text>
</comment>
<accession>P63351</accession>
<accession>Q8XGF8</accession>
<protein>
    <recommendedName>
        <fullName evidence="1">Vitamin B12 import ATP-binding protein BtuD</fullName>
        <ecNumber evidence="1">7.6.2.8</ecNumber>
    </recommendedName>
    <alternativeName>
        <fullName evidence="1">Vitamin B12-transporting ATPase</fullName>
    </alternativeName>
</protein>
<organism>
    <name type="scientific">Salmonella typhimurium (strain LT2 / SGSC1412 / ATCC 700720)</name>
    <dbReference type="NCBI Taxonomy" id="99287"/>
    <lineage>
        <taxon>Bacteria</taxon>
        <taxon>Pseudomonadati</taxon>
        <taxon>Pseudomonadota</taxon>
        <taxon>Gammaproteobacteria</taxon>
        <taxon>Enterobacterales</taxon>
        <taxon>Enterobacteriaceae</taxon>
        <taxon>Salmonella</taxon>
    </lineage>
</organism>
<evidence type="ECO:0000255" key="1">
    <source>
        <dbReference type="HAMAP-Rule" id="MF_01005"/>
    </source>
</evidence>
<keyword id="KW-0067">ATP-binding</keyword>
<keyword id="KW-0997">Cell inner membrane</keyword>
<keyword id="KW-1003">Cell membrane</keyword>
<keyword id="KW-0472">Membrane</keyword>
<keyword id="KW-0547">Nucleotide-binding</keyword>
<keyword id="KW-1185">Reference proteome</keyword>
<keyword id="KW-1278">Translocase</keyword>
<keyword id="KW-0813">Transport</keyword>
<feature type="chain" id="PRO_0000091959" description="Vitamin B12 import ATP-binding protein BtuD">
    <location>
        <begin position="1"/>
        <end position="249"/>
    </location>
</feature>
<feature type="domain" description="ABC transporter" evidence="1">
    <location>
        <begin position="1"/>
        <end position="233"/>
    </location>
</feature>
<feature type="binding site" evidence="1">
    <location>
        <begin position="33"/>
        <end position="40"/>
    </location>
    <ligand>
        <name>ATP</name>
        <dbReference type="ChEBI" id="CHEBI:30616"/>
    </ligand>
</feature>
<gene>
    <name evidence="1" type="primary">btuD</name>
    <name type="ordered locus">STM1342</name>
</gene>
<sequence length="249" mass="27109">MSQLMQLKDVAESTRLGPLSGEVSAGEILHLVGPNGAGKSTLLARMAGLTSGEGSIRFGGAPLEAWATATLAQHRAYLAQQQNPPFAMPVWHYLTLHQPDKTRTGQLNEVADMLGLGDKLGRSVNQLSGGEWQRVRLAAVVLQIHPDANPVGQLLLLDEPMNSLDVAQQNALDRVLHHLCQAGIAIVMSSHDLNHTLRHAHKAWLLKRGKLIACGRREEVLTPSYLAQAYGLRFRRLDVEGHPMLISAT</sequence>
<proteinExistence type="inferred from homology"/>
<name>BTUD_SALTY</name>
<dbReference type="EC" id="7.6.2.8" evidence="1"/>
<dbReference type="EMBL" id="AE006468">
    <property type="protein sequence ID" value="AAL20267.1"/>
    <property type="molecule type" value="Genomic_DNA"/>
</dbReference>
<dbReference type="RefSeq" id="NP_460308.1">
    <property type="nucleotide sequence ID" value="NC_003197.2"/>
</dbReference>
<dbReference type="RefSeq" id="WP_000080607.1">
    <property type="nucleotide sequence ID" value="NC_003197.2"/>
</dbReference>
<dbReference type="SMR" id="P63351"/>
<dbReference type="STRING" id="99287.STM1342"/>
<dbReference type="PaxDb" id="99287-STM1342"/>
<dbReference type="GeneID" id="1252860"/>
<dbReference type="KEGG" id="stm:STM1342"/>
<dbReference type="PATRIC" id="fig|99287.12.peg.1425"/>
<dbReference type="HOGENOM" id="CLU_000604_1_11_6"/>
<dbReference type="OMA" id="CAHDLNH"/>
<dbReference type="PhylomeDB" id="P63351"/>
<dbReference type="BioCyc" id="SENT99287:STM1342-MONOMER"/>
<dbReference type="Proteomes" id="UP000001014">
    <property type="component" value="Chromosome"/>
</dbReference>
<dbReference type="GO" id="GO:0043190">
    <property type="term" value="C:ATP-binding cassette (ABC) transporter complex"/>
    <property type="evidence" value="ECO:0000318"/>
    <property type="project" value="GO_Central"/>
</dbReference>
<dbReference type="GO" id="GO:0015420">
    <property type="term" value="F:ABC-type vitamin B12 transporter activity"/>
    <property type="evidence" value="ECO:0007669"/>
    <property type="project" value="UniProtKB-UniRule"/>
</dbReference>
<dbReference type="GO" id="GO:0005524">
    <property type="term" value="F:ATP binding"/>
    <property type="evidence" value="ECO:0007669"/>
    <property type="project" value="UniProtKB-KW"/>
</dbReference>
<dbReference type="GO" id="GO:0016887">
    <property type="term" value="F:ATP hydrolysis activity"/>
    <property type="evidence" value="ECO:0007669"/>
    <property type="project" value="InterPro"/>
</dbReference>
<dbReference type="GO" id="GO:0042626">
    <property type="term" value="F:ATPase-coupled transmembrane transporter activity"/>
    <property type="evidence" value="ECO:0000318"/>
    <property type="project" value="GO_Central"/>
</dbReference>
<dbReference type="CDD" id="cd03214">
    <property type="entry name" value="ABC_Iron-Siderophores_B12_Hemin"/>
    <property type="match status" value="1"/>
</dbReference>
<dbReference type="FunFam" id="3.40.50.300:FF:000462">
    <property type="entry name" value="Vitamin B12 import ATP-binding protein BtuD"/>
    <property type="match status" value="1"/>
</dbReference>
<dbReference type="Gene3D" id="3.40.50.300">
    <property type="entry name" value="P-loop containing nucleotide triphosphate hydrolases"/>
    <property type="match status" value="1"/>
</dbReference>
<dbReference type="HAMAP" id="MF_01005">
    <property type="entry name" value="BtuD"/>
    <property type="match status" value="1"/>
</dbReference>
<dbReference type="InterPro" id="IPR003593">
    <property type="entry name" value="AAA+_ATPase"/>
</dbReference>
<dbReference type="InterPro" id="IPR003439">
    <property type="entry name" value="ABC_transporter-like_ATP-bd"/>
</dbReference>
<dbReference type="InterPro" id="IPR017871">
    <property type="entry name" value="ABC_transporter-like_CS"/>
</dbReference>
<dbReference type="InterPro" id="IPR023693">
    <property type="entry name" value="ABC_transptr_BtuD"/>
</dbReference>
<dbReference type="InterPro" id="IPR050153">
    <property type="entry name" value="Metal_Ion_Import_ABC"/>
</dbReference>
<dbReference type="InterPro" id="IPR027417">
    <property type="entry name" value="P-loop_NTPase"/>
</dbReference>
<dbReference type="NCBIfam" id="NF002981">
    <property type="entry name" value="PRK03695.1"/>
    <property type="match status" value="1"/>
</dbReference>
<dbReference type="PANTHER" id="PTHR42734">
    <property type="entry name" value="METAL TRANSPORT SYSTEM ATP-BINDING PROTEIN TM_0124-RELATED"/>
    <property type="match status" value="1"/>
</dbReference>
<dbReference type="PANTHER" id="PTHR42734:SF18">
    <property type="entry name" value="VITAMIN B12 IMPORT ATP-BINDING PROTEIN BTUD"/>
    <property type="match status" value="1"/>
</dbReference>
<dbReference type="Pfam" id="PF00005">
    <property type="entry name" value="ABC_tran"/>
    <property type="match status" value="1"/>
</dbReference>
<dbReference type="SMART" id="SM00382">
    <property type="entry name" value="AAA"/>
    <property type="match status" value="1"/>
</dbReference>
<dbReference type="SUPFAM" id="SSF52540">
    <property type="entry name" value="P-loop containing nucleoside triphosphate hydrolases"/>
    <property type="match status" value="1"/>
</dbReference>
<dbReference type="PROSITE" id="PS00211">
    <property type="entry name" value="ABC_TRANSPORTER_1"/>
    <property type="match status" value="1"/>
</dbReference>
<dbReference type="PROSITE" id="PS50893">
    <property type="entry name" value="ABC_TRANSPORTER_2"/>
    <property type="match status" value="1"/>
</dbReference>
<reference key="1">
    <citation type="journal article" date="2001" name="Nature">
        <title>Complete genome sequence of Salmonella enterica serovar Typhimurium LT2.</title>
        <authorList>
            <person name="McClelland M."/>
            <person name="Sanderson K.E."/>
            <person name="Spieth J."/>
            <person name="Clifton S.W."/>
            <person name="Latreille P."/>
            <person name="Courtney L."/>
            <person name="Porwollik S."/>
            <person name="Ali J."/>
            <person name="Dante M."/>
            <person name="Du F."/>
            <person name="Hou S."/>
            <person name="Layman D."/>
            <person name="Leonard S."/>
            <person name="Nguyen C."/>
            <person name="Scott K."/>
            <person name="Holmes A."/>
            <person name="Grewal N."/>
            <person name="Mulvaney E."/>
            <person name="Ryan E."/>
            <person name="Sun H."/>
            <person name="Florea L."/>
            <person name="Miller W."/>
            <person name="Stoneking T."/>
            <person name="Nhan M."/>
            <person name="Waterston R."/>
            <person name="Wilson R.K."/>
        </authorList>
    </citation>
    <scope>NUCLEOTIDE SEQUENCE [LARGE SCALE GENOMIC DNA]</scope>
    <source>
        <strain>LT2 / SGSC1412 / ATCC 700720</strain>
    </source>
</reference>